<gene>
    <name evidence="1" type="primary">pyrB</name>
    <name type="ordered locus">XF_2226</name>
</gene>
<name>PYRB_XYLFA</name>
<comment type="function">
    <text evidence="1">Catalyzes the condensation of carbamoyl phosphate and aspartate to form carbamoyl aspartate and inorganic phosphate, the committed step in the de novo pyrimidine nucleotide biosynthesis pathway.</text>
</comment>
<comment type="catalytic activity">
    <reaction evidence="1">
        <text>carbamoyl phosphate + L-aspartate = N-carbamoyl-L-aspartate + phosphate + H(+)</text>
        <dbReference type="Rhea" id="RHEA:20013"/>
        <dbReference type="ChEBI" id="CHEBI:15378"/>
        <dbReference type="ChEBI" id="CHEBI:29991"/>
        <dbReference type="ChEBI" id="CHEBI:32814"/>
        <dbReference type="ChEBI" id="CHEBI:43474"/>
        <dbReference type="ChEBI" id="CHEBI:58228"/>
        <dbReference type="EC" id="2.1.3.2"/>
    </reaction>
</comment>
<comment type="pathway">
    <text evidence="1">Pyrimidine metabolism; UMP biosynthesis via de novo pathway; (S)-dihydroorotate from bicarbonate: step 2/3.</text>
</comment>
<comment type="subunit">
    <text evidence="1">Heterododecamer (2C3:3R2) of six catalytic PyrB chains organized as two trimers (C3), and six regulatory PyrI chains organized as three dimers (R2).</text>
</comment>
<comment type="similarity">
    <text evidence="1">Belongs to the aspartate/ornithine carbamoyltransferase superfamily. ATCase family.</text>
</comment>
<evidence type="ECO:0000255" key="1">
    <source>
        <dbReference type="HAMAP-Rule" id="MF_00001"/>
    </source>
</evidence>
<keyword id="KW-0665">Pyrimidine biosynthesis</keyword>
<keyword id="KW-0808">Transferase</keyword>
<proteinExistence type="inferred from homology"/>
<accession>Q9PBB8</accession>
<feature type="chain" id="PRO_0000113235" description="Aspartate carbamoyltransferase catalytic subunit">
    <location>
        <begin position="1"/>
        <end position="322"/>
    </location>
</feature>
<feature type="binding site" evidence="1">
    <location>
        <position position="70"/>
    </location>
    <ligand>
        <name>carbamoyl phosphate</name>
        <dbReference type="ChEBI" id="CHEBI:58228"/>
    </ligand>
</feature>
<feature type="binding site" evidence="1">
    <location>
        <position position="71"/>
    </location>
    <ligand>
        <name>carbamoyl phosphate</name>
        <dbReference type="ChEBI" id="CHEBI:58228"/>
    </ligand>
</feature>
<feature type="binding site" evidence="1">
    <location>
        <position position="98"/>
    </location>
    <ligand>
        <name>L-aspartate</name>
        <dbReference type="ChEBI" id="CHEBI:29991"/>
    </ligand>
</feature>
<feature type="binding site" evidence="1">
    <location>
        <position position="120"/>
    </location>
    <ligand>
        <name>carbamoyl phosphate</name>
        <dbReference type="ChEBI" id="CHEBI:58228"/>
    </ligand>
</feature>
<feature type="binding site" evidence="1">
    <location>
        <position position="150"/>
    </location>
    <ligand>
        <name>carbamoyl phosphate</name>
        <dbReference type="ChEBI" id="CHEBI:58228"/>
    </ligand>
</feature>
<feature type="binding site" evidence="1">
    <location>
        <position position="153"/>
    </location>
    <ligand>
        <name>carbamoyl phosphate</name>
        <dbReference type="ChEBI" id="CHEBI:58228"/>
    </ligand>
</feature>
<feature type="binding site" evidence="1">
    <location>
        <position position="184"/>
    </location>
    <ligand>
        <name>L-aspartate</name>
        <dbReference type="ChEBI" id="CHEBI:29991"/>
    </ligand>
</feature>
<feature type="binding site" evidence="1">
    <location>
        <position position="239"/>
    </location>
    <ligand>
        <name>L-aspartate</name>
        <dbReference type="ChEBI" id="CHEBI:29991"/>
    </ligand>
</feature>
<feature type="binding site" evidence="1">
    <location>
        <position position="280"/>
    </location>
    <ligand>
        <name>carbamoyl phosphate</name>
        <dbReference type="ChEBI" id="CHEBI:58228"/>
    </ligand>
</feature>
<feature type="binding site" evidence="1">
    <location>
        <position position="281"/>
    </location>
    <ligand>
        <name>carbamoyl phosphate</name>
        <dbReference type="ChEBI" id="CHEBI:58228"/>
    </ligand>
</feature>
<protein>
    <recommendedName>
        <fullName evidence="1">Aspartate carbamoyltransferase catalytic subunit</fullName>
        <ecNumber evidence="1">2.1.3.2</ecNumber>
    </recommendedName>
    <alternativeName>
        <fullName evidence="1">Aspartate transcarbamylase</fullName>
        <shortName evidence="1">ATCase</shortName>
    </alternativeName>
</protein>
<dbReference type="EC" id="2.1.3.2" evidence="1"/>
<dbReference type="EMBL" id="AE003849">
    <property type="protein sequence ID" value="AAF85025.1"/>
    <property type="molecule type" value="Genomic_DNA"/>
</dbReference>
<dbReference type="PIR" id="H82583">
    <property type="entry name" value="H82583"/>
</dbReference>
<dbReference type="SMR" id="Q9PBB8"/>
<dbReference type="STRING" id="160492.XF_2226"/>
<dbReference type="KEGG" id="xfa:XF_2226"/>
<dbReference type="eggNOG" id="COG0540">
    <property type="taxonomic scope" value="Bacteria"/>
</dbReference>
<dbReference type="HOGENOM" id="CLU_043846_2_0_6"/>
<dbReference type="UniPathway" id="UPA00070">
    <property type="reaction ID" value="UER00116"/>
</dbReference>
<dbReference type="Proteomes" id="UP000000812">
    <property type="component" value="Chromosome"/>
</dbReference>
<dbReference type="GO" id="GO:0005829">
    <property type="term" value="C:cytosol"/>
    <property type="evidence" value="ECO:0007669"/>
    <property type="project" value="TreeGrafter"/>
</dbReference>
<dbReference type="GO" id="GO:0016597">
    <property type="term" value="F:amino acid binding"/>
    <property type="evidence" value="ECO:0007669"/>
    <property type="project" value="InterPro"/>
</dbReference>
<dbReference type="GO" id="GO:0004070">
    <property type="term" value="F:aspartate carbamoyltransferase activity"/>
    <property type="evidence" value="ECO:0007669"/>
    <property type="project" value="UniProtKB-UniRule"/>
</dbReference>
<dbReference type="GO" id="GO:0006207">
    <property type="term" value="P:'de novo' pyrimidine nucleobase biosynthetic process"/>
    <property type="evidence" value="ECO:0007669"/>
    <property type="project" value="InterPro"/>
</dbReference>
<dbReference type="GO" id="GO:0044205">
    <property type="term" value="P:'de novo' UMP biosynthetic process"/>
    <property type="evidence" value="ECO:0007669"/>
    <property type="project" value="UniProtKB-UniRule"/>
</dbReference>
<dbReference type="GO" id="GO:0006520">
    <property type="term" value="P:amino acid metabolic process"/>
    <property type="evidence" value="ECO:0007669"/>
    <property type="project" value="InterPro"/>
</dbReference>
<dbReference type="FunFam" id="3.40.50.1370:FF:000007">
    <property type="entry name" value="Aspartate carbamoyltransferase"/>
    <property type="match status" value="1"/>
</dbReference>
<dbReference type="Gene3D" id="3.40.50.1370">
    <property type="entry name" value="Aspartate/ornithine carbamoyltransferase"/>
    <property type="match status" value="2"/>
</dbReference>
<dbReference type="HAMAP" id="MF_00001">
    <property type="entry name" value="Asp_carb_tr"/>
    <property type="match status" value="1"/>
</dbReference>
<dbReference type="InterPro" id="IPR006132">
    <property type="entry name" value="Asp/Orn_carbamoyltranf_P-bd"/>
</dbReference>
<dbReference type="InterPro" id="IPR006130">
    <property type="entry name" value="Asp/Orn_carbamoylTrfase"/>
</dbReference>
<dbReference type="InterPro" id="IPR036901">
    <property type="entry name" value="Asp/Orn_carbamoylTrfase_sf"/>
</dbReference>
<dbReference type="InterPro" id="IPR002082">
    <property type="entry name" value="Asp_carbamoyltransf"/>
</dbReference>
<dbReference type="InterPro" id="IPR006131">
    <property type="entry name" value="Asp_carbamoyltransf_Asp/Orn-bd"/>
</dbReference>
<dbReference type="NCBIfam" id="TIGR00670">
    <property type="entry name" value="asp_carb_tr"/>
    <property type="match status" value="1"/>
</dbReference>
<dbReference type="NCBIfam" id="NF002032">
    <property type="entry name" value="PRK00856.1"/>
    <property type="match status" value="1"/>
</dbReference>
<dbReference type="PANTHER" id="PTHR45753:SF6">
    <property type="entry name" value="ASPARTATE CARBAMOYLTRANSFERASE"/>
    <property type="match status" value="1"/>
</dbReference>
<dbReference type="PANTHER" id="PTHR45753">
    <property type="entry name" value="ORNITHINE CARBAMOYLTRANSFERASE, MITOCHONDRIAL"/>
    <property type="match status" value="1"/>
</dbReference>
<dbReference type="Pfam" id="PF00185">
    <property type="entry name" value="OTCace"/>
    <property type="match status" value="1"/>
</dbReference>
<dbReference type="Pfam" id="PF02729">
    <property type="entry name" value="OTCace_N"/>
    <property type="match status" value="1"/>
</dbReference>
<dbReference type="PRINTS" id="PR00100">
    <property type="entry name" value="AOTCASE"/>
</dbReference>
<dbReference type="PRINTS" id="PR00101">
    <property type="entry name" value="ATCASE"/>
</dbReference>
<dbReference type="SUPFAM" id="SSF53671">
    <property type="entry name" value="Aspartate/ornithine carbamoyltransferase"/>
    <property type="match status" value="1"/>
</dbReference>
<dbReference type="PROSITE" id="PS00097">
    <property type="entry name" value="CARBAMOYLTRANSFERASE"/>
    <property type="match status" value="1"/>
</dbReference>
<reference key="1">
    <citation type="journal article" date="2000" name="Nature">
        <title>The genome sequence of the plant pathogen Xylella fastidiosa.</title>
        <authorList>
            <person name="Simpson A.J.G."/>
            <person name="Reinach F.C."/>
            <person name="Arruda P."/>
            <person name="Abreu F.A."/>
            <person name="Acencio M."/>
            <person name="Alvarenga R."/>
            <person name="Alves L.M.C."/>
            <person name="Araya J.E."/>
            <person name="Baia G.S."/>
            <person name="Baptista C.S."/>
            <person name="Barros M.H."/>
            <person name="Bonaccorsi E.D."/>
            <person name="Bordin S."/>
            <person name="Bove J.M."/>
            <person name="Briones M.R.S."/>
            <person name="Bueno M.R.P."/>
            <person name="Camargo A.A."/>
            <person name="Camargo L.E.A."/>
            <person name="Carraro D.M."/>
            <person name="Carrer H."/>
            <person name="Colauto N.B."/>
            <person name="Colombo C."/>
            <person name="Costa F.F."/>
            <person name="Costa M.C.R."/>
            <person name="Costa-Neto C.M."/>
            <person name="Coutinho L.L."/>
            <person name="Cristofani M."/>
            <person name="Dias-Neto E."/>
            <person name="Docena C."/>
            <person name="El-Dorry H."/>
            <person name="Facincani A.P."/>
            <person name="Ferreira A.J.S."/>
            <person name="Ferreira V.C.A."/>
            <person name="Ferro J.A."/>
            <person name="Fraga J.S."/>
            <person name="Franca S.C."/>
            <person name="Franco M.C."/>
            <person name="Frohme M."/>
            <person name="Furlan L.R."/>
            <person name="Garnier M."/>
            <person name="Goldman G.H."/>
            <person name="Goldman M.H.S."/>
            <person name="Gomes S.L."/>
            <person name="Gruber A."/>
            <person name="Ho P.L."/>
            <person name="Hoheisel J.D."/>
            <person name="Junqueira M.L."/>
            <person name="Kemper E.L."/>
            <person name="Kitajima J.P."/>
            <person name="Krieger J.E."/>
            <person name="Kuramae E.E."/>
            <person name="Laigret F."/>
            <person name="Lambais M.R."/>
            <person name="Leite L.C.C."/>
            <person name="Lemos E.G.M."/>
            <person name="Lemos M.V.F."/>
            <person name="Lopes S.A."/>
            <person name="Lopes C.R."/>
            <person name="Machado J.A."/>
            <person name="Machado M.A."/>
            <person name="Madeira A.M.B.N."/>
            <person name="Madeira H.M.F."/>
            <person name="Marino C.L."/>
            <person name="Marques M.V."/>
            <person name="Martins E.A.L."/>
            <person name="Martins E.M.F."/>
            <person name="Matsukuma A.Y."/>
            <person name="Menck C.F.M."/>
            <person name="Miracca E.C."/>
            <person name="Miyaki C.Y."/>
            <person name="Monteiro-Vitorello C.B."/>
            <person name="Moon D.H."/>
            <person name="Nagai M.A."/>
            <person name="Nascimento A.L.T.O."/>
            <person name="Netto L.E.S."/>
            <person name="Nhani A. Jr."/>
            <person name="Nobrega F.G."/>
            <person name="Nunes L.R."/>
            <person name="Oliveira M.A."/>
            <person name="de Oliveira M.C."/>
            <person name="de Oliveira R.C."/>
            <person name="Palmieri D.A."/>
            <person name="Paris A."/>
            <person name="Peixoto B.R."/>
            <person name="Pereira G.A.G."/>
            <person name="Pereira H.A. Jr."/>
            <person name="Pesquero J.B."/>
            <person name="Quaggio R.B."/>
            <person name="Roberto P.G."/>
            <person name="Rodrigues V."/>
            <person name="de Rosa A.J.M."/>
            <person name="de Rosa V.E. Jr."/>
            <person name="de Sa R.G."/>
            <person name="Santelli R.V."/>
            <person name="Sawasaki H.E."/>
            <person name="da Silva A.C.R."/>
            <person name="da Silva A.M."/>
            <person name="da Silva F.R."/>
            <person name="Silva W.A. Jr."/>
            <person name="da Silveira J.F."/>
            <person name="Silvestri M.L.Z."/>
            <person name="Siqueira W.J."/>
            <person name="de Souza A.A."/>
            <person name="de Souza A.P."/>
            <person name="Terenzi M.F."/>
            <person name="Truffi D."/>
            <person name="Tsai S.M."/>
            <person name="Tsuhako M.H."/>
            <person name="Vallada H."/>
            <person name="Van Sluys M.A."/>
            <person name="Verjovski-Almeida S."/>
            <person name="Vettore A.L."/>
            <person name="Zago M.A."/>
            <person name="Zatz M."/>
            <person name="Meidanis J."/>
            <person name="Setubal J.C."/>
        </authorList>
    </citation>
    <scope>NUCLEOTIDE SEQUENCE [LARGE SCALE GENOMIC DNA]</scope>
    <source>
        <strain>9a5c</strain>
    </source>
</reference>
<sequence length="322" mass="34637">MNLKAITLMQFDSNGRLRHLLTLEGLSRDTLLQLLDCAAQNCALGVDPMGKRNVLAGMAVCTLFFEPSTRTRHSFHLAAQRLGADVLNFDASMSSTSKGESACDTLKNLEAMGVRGFIVRHPEEIVIAQLAAVVGEGTVLINAGAGRSTHPTQALLDMLTLCQAKGNDFSKLKLLFVGDIKHSRVARSNLHALRTLGAGQIRVCGPTALLPHDGLLSGCVVSQDFDAMLEGVDVLMMLRLQRERMEEGLVPSLEHYHANYGLTAARLARAAPDAVVLHPGPINRGVEITDEVADGPQSWILRQASNGVMVRMAVLETLLGCA</sequence>
<organism>
    <name type="scientific">Xylella fastidiosa (strain 9a5c)</name>
    <dbReference type="NCBI Taxonomy" id="160492"/>
    <lineage>
        <taxon>Bacteria</taxon>
        <taxon>Pseudomonadati</taxon>
        <taxon>Pseudomonadota</taxon>
        <taxon>Gammaproteobacteria</taxon>
        <taxon>Lysobacterales</taxon>
        <taxon>Lysobacteraceae</taxon>
        <taxon>Xylella</taxon>
    </lineage>
</organism>